<protein>
    <recommendedName>
        <fullName evidence="1">Anthranilate phosphoribosyltransferase</fullName>
        <ecNumber evidence="1">2.4.2.18</ecNumber>
    </recommendedName>
</protein>
<gene>
    <name evidence="1" type="primary">trpD</name>
    <name type="ordered locus">RHOS4_05830</name>
    <name type="ordered locus">RSP_2001</name>
</gene>
<proteinExistence type="inferred from homology"/>
<reference key="1">
    <citation type="submission" date="1998-11" db="EMBL/GenBank/DDBJ databases">
        <title>Trp-ing up paradigms: distribution of tryptophan biosynthesis genes in Rhodobacter sphaeroides 2.4.1.</title>
        <authorList>
            <person name="Simmons A.E."/>
            <person name="Mackenzie R.C."/>
            <person name="Kaplan S."/>
        </authorList>
    </citation>
    <scope>NUCLEOTIDE SEQUENCE [GENOMIC DNA]</scope>
</reference>
<reference key="2">
    <citation type="submission" date="2005-09" db="EMBL/GenBank/DDBJ databases">
        <title>Complete sequence of chromosome 1 of Rhodobacter sphaeroides 2.4.1.</title>
        <authorList>
            <person name="Copeland A."/>
            <person name="Lucas S."/>
            <person name="Lapidus A."/>
            <person name="Barry K."/>
            <person name="Detter J.C."/>
            <person name="Glavina T."/>
            <person name="Hammon N."/>
            <person name="Israni S."/>
            <person name="Pitluck S."/>
            <person name="Richardson P."/>
            <person name="Mackenzie C."/>
            <person name="Choudhary M."/>
            <person name="Larimer F."/>
            <person name="Hauser L.J."/>
            <person name="Land M."/>
            <person name="Donohue T.J."/>
            <person name="Kaplan S."/>
        </authorList>
    </citation>
    <scope>NUCLEOTIDE SEQUENCE [LARGE SCALE GENOMIC DNA]</scope>
    <source>
        <strain>ATCC 17023 / DSM 158 / JCM 6121 / CCUG 31486 / LMG 2827 / NBRC 12203 / NCIMB 8253 / ATH 2.4.1.</strain>
    </source>
</reference>
<keyword id="KW-0028">Amino-acid biosynthesis</keyword>
<keyword id="KW-0057">Aromatic amino acid biosynthesis</keyword>
<keyword id="KW-0328">Glycosyltransferase</keyword>
<keyword id="KW-0460">Magnesium</keyword>
<keyword id="KW-0479">Metal-binding</keyword>
<keyword id="KW-1185">Reference proteome</keyword>
<keyword id="KW-0808">Transferase</keyword>
<keyword id="KW-0822">Tryptophan biosynthesis</keyword>
<feature type="chain" id="PRO_0000154476" description="Anthranilate phosphoribosyltransferase">
    <location>
        <begin position="1"/>
        <end position="338"/>
    </location>
</feature>
<feature type="binding site" evidence="1">
    <location>
        <position position="81"/>
    </location>
    <ligand>
        <name>5-phospho-alpha-D-ribose 1-diphosphate</name>
        <dbReference type="ChEBI" id="CHEBI:58017"/>
    </ligand>
</feature>
<feature type="binding site" evidence="1">
    <location>
        <position position="81"/>
    </location>
    <ligand>
        <name>anthranilate</name>
        <dbReference type="ChEBI" id="CHEBI:16567"/>
        <label>1</label>
    </ligand>
</feature>
<feature type="binding site" evidence="1">
    <location>
        <begin position="84"/>
        <end position="85"/>
    </location>
    <ligand>
        <name>5-phospho-alpha-D-ribose 1-diphosphate</name>
        <dbReference type="ChEBI" id="CHEBI:58017"/>
    </ligand>
</feature>
<feature type="binding site" evidence="1">
    <location>
        <position position="89"/>
    </location>
    <ligand>
        <name>5-phospho-alpha-D-ribose 1-diphosphate</name>
        <dbReference type="ChEBI" id="CHEBI:58017"/>
    </ligand>
</feature>
<feature type="binding site" evidence="1">
    <location>
        <begin position="91"/>
        <end position="94"/>
    </location>
    <ligand>
        <name>5-phospho-alpha-D-ribose 1-diphosphate</name>
        <dbReference type="ChEBI" id="CHEBI:58017"/>
    </ligand>
</feature>
<feature type="binding site" evidence="1">
    <location>
        <position position="93"/>
    </location>
    <ligand>
        <name>Mg(2+)</name>
        <dbReference type="ChEBI" id="CHEBI:18420"/>
        <label>1</label>
    </ligand>
</feature>
<feature type="binding site" evidence="1">
    <location>
        <begin position="109"/>
        <end position="117"/>
    </location>
    <ligand>
        <name>5-phospho-alpha-D-ribose 1-diphosphate</name>
        <dbReference type="ChEBI" id="CHEBI:58017"/>
    </ligand>
</feature>
<feature type="binding site" evidence="1">
    <location>
        <position position="112"/>
    </location>
    <ligand>
        <name>anthranilate</name>
        <dbReference type="ChEBI" id="CHEBI:16567"/>
        <label>1</label>
    </ligand>
</feature>
<feature type="binding site" evidence="1">
    <location>
        <position position="121"/>
    </location>
    <ligand>
        <name>5-phospho-alpha-D-ribose 1-diphosphate</name>
        <dbReference type="ChEBI" id="CHEBI:58017"/>
    </ligand>
</feature>
<feature type="binding site" evidence="1">
    <location>
        <position position="167"/>
    </location>
    <ligand>
        <name>anthranilate</name>
        <dbReference type="ChEBI" id="CHEBI:16567"/>
        <label>2</label>
    </ligand>
</feature>
<feature type="binding site" evidence="1">
    <location>
        <position position="226"/>
    </location>
    <ligand>
        <name>Mg(2+)</name>
        <dbReference type="ChEBI" id="CHEBI:18420"/>
        <label>2</label>
    </ligand>
</feature>
<feature type="binding site" evidence="1">
    <location>
        <position position="227"/>
    </location>
    <ligand>
        <name>Mg(2+)</name>
        <dbReference type="ChEBI" id="CHEBI:18420"/>
        <label>1</label>
    </ligand>
</feature>
<feature type="binding site" evidence="1">
    <location>
        <position position="227"/>
    </location>
    <ligand>
        <name>Mg(2+)</name>
        <dbReference type="ChEBI" id="CHEBI:18420"/>
        <label>2</label>
    </ligand>
</feature>
<name>TRPD_CERS4</name>
<organism>
    <name type="scientific">Cereibacter sphaeroides (strain ATCC 17023 / DSM 158 / JCM 6121 / CCUG 31486 / LMG 2827 / NBRC 12203 / NCIMB 8253 / ATH 2.4.1.)</name>
    <name type="common">Rhodobacter sphaeroides</name>
    <dbReference type="NCBI Taxonomy" id="272943"/>
    <lineage>
        <taxon>Bacteria</taxon>
        <taxon>Pseudomonadati</taxon>
        <taxon>Pseudomonadota</taxon>
        <taxon>Alphaproteobacteria</taxon>
        <taxon>Rhodobacterales</taxon>
        <taxon>Paracoccaceae</taxon>
        <taxon>Cereibacter</taxon>
    </lineage>
</organism>
<evidence type="ECO:0000255" key="1">
    <source>
        <dbReference type="HAMAP-Rule" id="MF_00211"/>
    </source>
</evidence>
<sequence>MSDRLKPLIGTAATRPLSREEAEFAFECLFEGEATPAQMGGLLMALRTRGETVDEYAAAASVMRAKCHKVRAPHGAIDIVGTGGDGKGTLNISTATAFVVAGAGVPVAKHGNRNLSSKSGAADALTEMGLNVMIGPEQVEACLLEAGIGFMMAPMHHPAMRHVGPVRAELGTRTIFNILGPLTNPAGVKRQLTGAFSPDLIRPMAEVLSALGSEKAWLVHGGDGTDELAISAASKVAALEGGQIREFELHPEEAGLPVHPFEEIVGGTPAENAQAFRALLDGAPGAYRDAVLLNAAAALVVADRAAHLREGVEIATDSILSGAAKAKVALLARLTNAA</sequence>
<accession>Q9ZFA8</accession>
<accession>Q3J4Y3</accession>
<comment type="function">
    <text evidence="1">Catalyzes the transfer of the phosphoribosyl group of 5-phosphorylribose-1-pyrophosphate (PRPP) to anthranilate to yield N-(5'-phosphoribosyl)-anthranilate (PRA).</text>
</comment>
<comment type="catalytic activity">
    <reaction evidence="1">
        <text>N-(5-phospho-beta-D-ribosyl)anthranilate + diphosphate = 5-phospho-alpha-D-ribose 1-diphosphate + anthranilate</text>
        <dbReference type="Rhea" id="RHEA:11768"/>
        <dbReference type="ChEBI" id="CHEBI:16567"/>
        <dbReference type="ChEBI" id="CHEBI:18277"/>
        <dbReference type="ChEBI" id="CHEBI:33019"/>
        <dbReference type="ChEBI" id="CHEBI:58017"/>
        <dbReference type="EC" id="2.4.2.18"/>
    </reaction>
</comment>
<comment type="cofactor">
    <cofactor evidence="1">
        <name>Mg(2+)</name>
        <dbReference type="ChEBI" id="CHEBI:18420"/>
    </cofactor>
    <text evidence="1">Binds 2 magnesium ions per monomer.</text>
</comment>
<comment type="pathway">
    <text evidence="1">Amino-acid biosynthesis; L-tryptophan biosynthesis; L-tryptophan from chorismate: step 2/5.</text>
</comment>
<comment type="subunit">
    <text evidence="1">Homodimer.</text>
</comment>
<comment type="similarity">
    <text evidence="1">Belongs to the anthranilate phosphoribosyltransferase family.</text>
</comment>
<dbReference type="EC" id="2.4.2.18" evidence="1"/>
<dbReference type="EMBL" id="AF108766">
    <property type="protein sequence ID" value="AAD09118.1"/>
    <property type="molecule type" value="Genomic_DNA"/>
</dbReference>
<dbReference type="EMBL" id="CP000143">
    <property type="protein sequence ID" value="ABA78151.1"/>
    <property type="molecule type" value="Genomic_DNA"/>
</dbReference>
<dbReference type="PIR" id="T46855">
    <property type="entry name" value="T46855"/>
</dbReference>
<dbReference type="RefSeq" id="WP_011337147.1">
    <property type="nucleotide sequence ID" value="NC_007493.2"/>
</dbReference>
<dbReference type="RefSeq" id="YP_352052.1">
    <property type="nucleotide sequence ID" value="NC_007493.2"/>
</dbReference>
<dbReference type="SMR" id="Q9ZFA8"/>
<dbReference type="STRING" id="272943.RSP_2001"/>
<dbReference type="EnsemblBacteria" id="ABA78151">
    <property type="protein sequence ID" value="ABA78151"/>
    <property type="gene ID" value="RSP_2001"/>
</dbReference>
<dbReference type="GeneID" id="3719334"/>
<dbReference type="KEGG" id="rsp:RSP_2001"/>
<dbReference type="PATRIC" id="fig|272943.9.peg.890"/>
<dbReference type="eggNOG" id="COG0547">
    <property type="taxonomic scope" value="Bacteria"/>
</dbReference>
<dbReference type="OrthoDB" id="9806430at2"/>
<dbReference type="PhylomeDB" id="Q9ZFA8"/>
<dbReference type="UniPathway" id="UPA00035">
    <property type="reaction ID" value="UER00041"/>
</dbReference>
<dbReference type="Proteomes" id="UP000002703">
    <property type="component" value="Chromosome 1"/>
</dbReference>
<dbReference type="GO" id="GO:0005829">
    <property type="term" value="C:cytosol"/>
    <property type="evidence" value="ECO:0007669"/>
    <property type="project" value="TreeGrafter"/>
</dbReference>
<dbReference type="GO" id="GO:0004048">
    <property type="term" value="F:anthranilate phosphoribosyltransferase activity"/>
    <property type="evidence" value="ECO:0007669"/>
    <property type="project" value="UniProtKB-UniRule"/>
</dbReference>
<dbReference type="GO" id="GO:0000287">
    <property type="term" value="F:magnesium ion binding"/>
    <property type="evidence" value="ECO:0007669"/>
    <property type="project" value="UniProtKB-UniRule"/>
</dbReference>
<dbReference type="GO" id="GO:0000162">
    <property type="term" value="P:L-tryptophan biosynthetic process"/>
    <property type="evidence" value="ECO:0007669"/>
    <property type="project" value="UniProtKB-UniRule"/>
</dbReference>
<dbReference type="FunFam" id="3.40.1030.10:FF:000002">
    <property type="entry name" value="Anthranilate phosphoribosyltransferase"/>
    <property type="match status" value="1"/>
</dbReference>
<dbReference type="Gene3D" id="3.40.1030.10">
    <property type="entry name" value="Nucleoside phosphorylase/phosphoribosyltransferase catalytic domain"/>
    <property type="match status" value="1"/>
</dbReference>
<dbReference type="Gene3D" id="1.20.970.10">
    <property type="entry name" value="Transferase, Pyrimidine Nucleoside Phosphorylase, Chain C"/>
    <property type="match status" value="1"/>
</dbReference>
<dbReference type="HAMAP" id="MF_00211">
    <property type="entry name" value="TrpD"/>
    <property type="match status" value="1"/>
</dbReference>
<dbReference type="InterPro" id="IPR005940">
    <property type="entry name" value="Anthranilate_Pribosyl_Tfrase"/>
</dbReference>
<dbReference type="InterPro" id="IPR000312">
    <property type="entry name" value="Glycosyl_Trfase_fam3"/>
</dbReference>
<dbReference type="InterPro" id="IPR017459">
    <property type="entry name" value="Glycosyl_Trfase_fam3_N_dom"/>
</dbReference>
<dbReference type="InterPro" id="IPR036320">
    <property type="entry name" value="Glycosyl_Trfase_fam3_N_dom_sf"/>
</dbReference>
<dbReference type="InterPro" id="IPR035902">
    <property type="entry name" value="Nuc_phospho_transferase"/>
</dbReference>
<dbReference type="NCBIfam" id="TIGR01245">
    <property type="entry name" value="trpD"/>
    <property type="match status" value="1"/>
</dbReference>
<dbReference type="PANTHER" id="PTHR43285">
    <property type="entry name" value="ANTHRANILATE PHOSPHORIBOSYLTRANSFERASE"/>
    <property type="match status" value="1"/>
</dbReference>
<dbReference type="PANTHER" id="PTHR43285:SF2">
    <property type="entry name" value="ANTHRANILATE PHOSPHORIBOSYLTRANSFERASE"/>
    <property type="match status" value="1"/>
</dbReference>
<dbReference type="Pfam" id="PF02885">
    <property type="entry name" value="Glycos_trans_3N"/>
    <property type="match status" value="1"/>
</dbReference>
<dbReference type="Pfam" id="PF00591">
    <property type="entry name" value="Glycos_transf_3"/>
    <property type="match status" value="1"/>
</dbReference>
<dbReference type="SUPFAM" id="SSF52418">
    <property type="entry name" value="Nucleoside phosphorylase/phosphoribosyltransferase catalytic domain"/>
    <property type="match status" value="1"/>
</dbReference>
<dbReference type="SUPFAM" id="SSF47648">
    <property type="entry name" value="Nucleoside phosphorylase/phosphoribosyltransferase N-terminal domain"/>
    <property type="match status" value="1"/>
</dbReference>